<proteinExistence type="inferred from homology"/>
<gene>
    <name evidence="1" type="primary">tatA</name>
    <name type="ordered locus">Mrad2831_2764</name>
</gene>
<accession>B1M332</accession>
<sequence>MGSMSIWHWVIVAVIVMLLFGRGKVSDLMGDVAKGIKAFKKGMAEDETPPAVQAAPPPAEPVRTIPHATETSPGTAIPASHLPGGERKPV</sequence>
<keyword id="KW-0997">Cell inner membrane</keyword>
<keyword id="KW-1003">Cell membrane</keyword>
<keyword id="KW-0472">Membrane</keyword>
<keyword id="KW-0653">Protein transport</keyword>
<keyword id="KW-0811">Translocation</keyword>
<keyword id="KW-0812">Transmembrane</keyword>
<keyword id="KW-1133">Transmembrane helix</keyword>
<keyword id="KW-0813">Transport</keyword>
<evidence type="ECO:0000255" key="1">
    <source>
        <dbReference type="HAMAP-Rule" id="MF_00236"/>
    </source>
</evidence>
<evidence type="ECO:0000256" key="2">
    <source>
        <dbReference type="SAM" id="MobiDB-lite"/>
    </source>
</evidence>
<dbReference type="EMBL" id="CP001001">
    <property type="protein sequence ID" value="ACB24748.1"/>
    <property type="molecule type" value="Genomic_DNA"/>
</dbReference>
<dbReference type="RefSeq" id="WP_012319717.1">
    <property type="nucleotide sequence ID" value="NC_010505.1"/>
</dbReference>
<dbReference type="SMR" id="B1M332"/>
<dbReference type="STRING" id="426355.Mrad2831_2764"/>
<dbReference type="GeneID" id="6138807"/>
<dbReference type="KEGG" id="mrd:Mrad2831_2764"/>
<dbReference type="eggNOG" id="COG1826">
    <property type="taxonomic scope" value="Bacteria"/>
</dbReference>
<dbReference type="HOGENOM" id="CLU_086034_5_0_5"/>
<dbReference type="OrthoDB" id="7161179at2"/>
<dbReference type="Proteomes" id="UP000006589">
    <property type="component" value="Chromosome"/>
</dbReference>
<dbReference type="GO" id="GO:0033281">
    <property type="term" value="C:TAT protein transport complex"/>
    <property type="evidence" value="ECO:0007669"/>
    <property type="project" value="UniProtKB-UniRule"/>
</dbReference>
<dbReference type="GO" id="GO:0008320">
    <property type="term" value="F:protein transmembrane transporter activity"/>
    <property type="evidence" value="ECO:0007669"/>
    <property type="project" value="UniProtKB-UniRule"/>
</dbReference>
<dbReference type="GO" id="GO:0043953">
    <property type="term" value="P:protein transport by the Tat complex"/>
    <property type="evidence" value="ECO:0007669"/>
    <property type="project" value="UniProtKB-UniRule"/>
</dbReference>
<dbReference type="Gene3D" id="1.20.5.3310">
    <property type="match status" value="1"/>
</dbReference>
<dbReference type="HAMAP" id="MF_00236">
    <property type="entry name" value="TatA_E"/>
    <property type="match status" value="1"/>
</dbReference>
<dbReference type="InterPro" id="IPR003369">
    <property type="entry name" value="TatA/B/E"/>
</dbReference>
<dbReference type="InterPro" id="IPR006312">
    <property type="entry name" value="TatA/E"/>
</dbReference>
<dbReference type="NCBIfam" id="NF001940">
    <property type="entry name" value="PRK00720.1"/>
    <property type="match status" value="1"/>
</dbReference>
<dbReference type="NCBIfam" id="TIGR01411">
    <property type="entry name" value="tatAE"/>
    <property type="match status" value="1"/>
</dbReference>
<dbReference type="PANTHER" id="PTHR42982">
    <property type="entry name" value="SEC-INDEPENDENT PROTEIN TRANSLOCASE PROTEIN TATA"/>
    <property type="match status" value="1"/>
</dbReference>
<dbReference type="PANTHER" id="PTHR42982:SF1">
    <property type="entry name" value="SEC-INDEPENDENT PROTEIN TRANSLOCASE PROTEIN TATA"/>
    <property type="match status" value="1"/>
</dbReference>
<dbReference type="Pfam" id="PF02416">
    <property type="entry name" value="TatA_B_E"/>
    <property type="match status" value="1"/>
</dbReference>
<comment type="function">
    <text evidence="1">Part of the twin-arginine translocation (Tat) system that transports large folded proteins containing a characteristic twin-arginine motif in their signal peptide across membranes. TatA could form the protein-conducting channel of the Tat system.</text>
</comment>
<comment type="subunit">
    <text evidence="1">The Tat system comprises two distinct complexes: a TatABC complex, containing multiple copies of TatA, TatB and TatC subunits, and a separate TatA complex, containing only TatA subunits. Substrates initially bind to the TatABC complex, which probably triggers association of the separate TatA complex to form the active translocon.</text>
</comment>
<comment type="subcellular location">
    <subcellularLocation>
        <location evidence="1">Cell inner membrane</location>
        <topology evidence="1">Single-pass membrane protein</topology>
    </subcellularLocation>
</comment>
<comment type="similarity">
    <text evidence="1">Belongs to the TatA/E family.</text>
</comment>
<feature type="chain" id="PRO_1000197881" description="Sec-independent protein translocase protein TatA">
    <location>
        <begin position="1"/>
        <end position="90"/>
    </location>
</feature>
<feature type="transmembrane region" description="Helical" evidence="1">
    <location>
        <begin position="1"/>
        <end position="21"/>
    </location>
</feature>
<feature type="region of interest" description="Disordered" evidence="2">
    <location>
        <begin position="44"/>
        <end position="90"/>
    </location>
</feature>
<reference key="1">
    <citation type="submission" date="2008-03" db="EMBL/GenBank/DDBJ databases">
        <title>Complete sequence of chromosome of Methylobacterium radiotolerans JCM 2831.</title>
        <authorList>
            <consortium name="US DOE Joint Genome Institute"/>
            <person name="Copeland A."/>
            <person name="Lucas S."/>
            <person name="Lapidus A."/>
            <person name="Glavina del Rio T."/>
            <person name="Dalin E."/>
            <person name="Tice H."/>
            <person name="Bruce D."/>
            <person name="Goodwin L."/>
            <person name="Pitluck S."/>
            <person name="Kiss H."/>
            <person name="Brettin T."/>
            <person name="Detter J.C."/>
            <person name="Han C."/>
            <person name="Kuske C.R."/>
            <person name="Schmutz J."/>
            <person name="Larimer F."/>
            <person name="Land M."/>
            <person name="Hauser L."/>
            <person name="Kyrpides N."/>
            <person name="Mikhailova N."/>
            <person name="Marx C.J."/>
            <person name="Richardson P."/>
        </authorList>
    </citation>
    <scope>NUCLEOTIDE SEQUENCE [LARGE SCALE GENOMIC DNA]</scope>
    <source>
        <strain>ATCC 27329 / DSM 1819 / JCM 2831 / NBRC 15690 / NCIMB 10815 / 0-1</strain>
    </source>
</reference>
<organism>
    <name type="scientific">Methylobacterium radiotolerans (strain ATCC 27329 / DSM 1819 / JCM 2831 / NBRC 15690 / NCIMB 10815 / 0-1)</name>
    <dbReference type="NCBI Taxonomy" id="426355"/>
    <lineage>
        <taxon>Bacteria</taxon>
        <taxon>Pseudomonadati</taxon>
        <taxon>Pseudomonadota</taxon>
        <taxon>Alphaproteobacteria</taxon>
        <taxon>Hyphomicrobiales</taxon>
        <taxon>Methylobacteriaceae</taxon>
        <taxon>Methylobacterium</taxon>
    </lineage>
</organism>
<protein>
    <recommendedName>
        <fullName evidence="1">Sec-independent protein translocase protein TatA</fullName>
    </recommendedName>
</protein>
<name>TATA_METRJ</name>